<gene>
    <name evidence="1" type="primary">surE</name>
    <name type="ordered locus">BSUIS_A0924</name>
</gene>
<name>SURE_BRUSI</name>
<organism>
    <name type="scientific">Brucella suis (strain ATCC 23445 / NCTC 10510)</name>
    <dbReference type="NCBI Taxonomy" id="470137"/>
    <lineage>
        <taxon>Bacteria</taxon>
        <taxon>Pseudomonadati</taxon>
        <taxon>Pseudomonadota</taxon>
        <taxon>Alphaproteobacteria</taxon>
        <taxon>Hyphomicrobiales</taxon>
        <taxon>Brucellaceae</taxon>
        <taxon>Brucella/Ochrobactrum group</taxon>
        <taxon>Brucella</taxon>
    </lineage>
</organism>
<evidence type="ECO:0000255" key="1">
    <source>
        <dbReference type="HAMAP-Rule" id="MF_00060"/>
    </source>
</evidence>
<comment type="function">
    <text evidence="1">Nucleotidase that shows phosphatase activity on nucleoside 5'-monophosphates.</text>
</comment>
<comment type="catalytic activity">
    <reaction evidence="1">
        <text>a ribonucleoside 5'-phosphate + H2O = a ribonucleoside + phosphate</text>
        <dbReference type="Rhea" id="RHEA:12484"/>
        <dbReference type="ChEBI" id="CHEBI:15377"/>
        <dbReference type="ChEBI" id="CHEBI:18254"/>
        <dbReference type="ChEBI" id="CHEBI:43474"/>
        <dbReference type="ChEBI" id="CHEBI:58043"/>
        <dbReference type="EC" id="3.1.3.5"/>
    </reaction>
</comment>
<comment type="cofactor">
    <cofactor evidence="1">
        <name>a divalent metal cation</name>
        <dbReference type="ChEBI" id="CHEBI:60240"/>
    </cofactor>
    <text evidence="1">Binds 1 divalent metal cation per subunit.</text>
</comment>
<comment type="subcellular location">
    <subcellularLocation>
        <location evidence="1">Cytoplasm</location>
    </subcellularLocation>
</comment>
<comment type="similarity">
    <text evidence="1">Belongs to the SurE nucleotidase family.</text>
</comment>
<protein>
    <recommendedName>
        <fullName evidence="1">5'-nucleotidase SurE</fullName>
        <ecNumber evidence="1">3.1.3.5</ecNumber>
    </recommendedName>
    <alternativeName>
        <fullName evidence="1">Nucleoside 5'-monophosphate phosphohydrolase</fullName>
    </alternativeName>
</protein>
<keyword id="KW-0963">Cytoplasm</keyword>
<keyword id="KW-0378">Hydrolase</keyword>
<keyword id="KW-0479">Metal-binding</keyword>
<keyword id="KW-0547">Nucleotide-binding</keyword>
<reference key="1">
    <citation type="submission" date="2007-12" db="EMBL/GenBank/DDBJ databases">
        <title>Brucella suis ATCC 23445 whole genome shotgun sequencing project.</title>
        <authorList>
            <person name="Setubal J.C."/>
            <person name="Bowns C."/>
            <person name="Boyle S."/>
            <person name="Crasta O.R."/>
            <person name="Czar M.J."/>
            <person name="Dharmanolla C."/>
            <person name="Gillespie J.J."/>
            <person name="Kenyon R.W."/>
            <person name="Lu J."/>
            <person name="Mane S."/>
            <person name="Mohapatra S."/>
            <person name="Nagrani S."/>
            <person name="Purkayastha A."/>
            <person name="Rajasimha H.K."/>
            <person name="Shallom J.M."/>
            <person name="Shallom S."/>
            <person name="Shukla M."/>
            <person name="Snyder E.E."/>
            <person name="Sobral B.W."/>
            <person name="Wattam A.R."/>
            <person name="Will R."/>
            <person name="Williams K."/>
            <person name="Yoo H."/>
            <person name="Bruce D."/>
            <person name="Detter C."/>
            <person name="Munk C."/>
            <person name="Brettin T.S."/>
        </authorList>
    </citation>
    <scope>NUCLEOTIDE SEQUENCE [LARGE SCALE GENOMIC DNA]</scope>
    <source>
        <strain>ATCC 23445 / NCTC 10510</strain>
    </source>
</reference>
<dbReference type="EC" id="3.1.3.5" evidence="1"/>
<dbReference type="EMBL" id="CP000911">
    <property type="protein sequence ID" value="ABY37991.1"/>
    <property type="molecule type" value="Genomic_DNA"/>
</dbReference>
<dbReference type="RefSeq" id="WP_006072613.1">
    <property type="nucleotide sequence ID" value="NC_010169.1"/>
</dbReference>
<dbReference type="SMR" id="B0CLL1"/>
<dbReference type="KEGG" id="bmt:BSUIS_A0924"/>
<dbReference type="HOGENOM" id="CLU_045192_1_2_5"/>
<dbReference type="Proteomes" id="UP000008545">
    <property type="component" value="Chromosome I"/>
</dbReference>
<dbReference type="GO" id="GO:0005737">
    <property type="term" value="C:cytoplasm"/>
    <property type="evidence" value="ECO:0007669"/>
    <property type="project" value="UniProtKB-SubCell"/>
</dbReference>
<dbReference type="GO" id="GO:0008254">
    <property type="term" value="F:3'-nucleotidase activity"/>
    <property type="evidence" value="ECO:0007669"/>
    <property type="project" value="TreeGrafter"/>
</dbReference>
<dbReference type="GO" id="GO:0008253">
    <property type="term" value="F:5'-nucleotidase activity"/>
    <property type="evidence" value="ECO:0007669"/>
    <property type="project" value="UniProtKB-UniRule"/>
</dbReference>
<dbReference type="GO" id="GO:0004309">
    <property type="term" value="F:exopolyphosphatase activity"/>
    <property type="evidence" value="ECO:0007669"/>
    <property type="project" value="TreeGrafter"/>
</dbReference>
<dbReference type="GO" id="GO:0046872">
    <property type="term" value="F:metal ion binding"/>
    <property type="evidence" value="ECO:0007669"/>
    <property type="project" value="UniProtKB-UniRule"/>
</dbReference>
<dbReference type="GO" id="GO:0000166">
    <property type="term" value="F:nucleotide binding"/>
    <property type="evidence" value="ECO:0007669"/>
    <property type="project" value="UniProtKB-KW"/>
</dbReference>
<dbReference type="FunFam" id="3.40.1210.10:FF:000001">
    <property type="entry name" value="5'/3'-nucleotidase SurE"/>
    <property type="match status" value="1"/>
</dbReference>
<dbReference type="Gene3D" id="3.40.1210.10">
    <property type="entry name" value="Survival protein SurE-like phosphatase/nucleotidase"/>
    <property type="match status" value="1"/>
</dbReference>
<dbReference type="HAMAP" id="MF_00060">
    <property type="entry name" value="SurE"/>
    <property type="match status" value="1"/>
</dbReference>
<dbReference type="InterPro" id="IPR030048">
    <property type="entry name" value="SurE"/>
</dbReference>
<dbReference type="InterPro" id="IPR002828">
    <property type="entry name" value="SurE-like_Pase/nucleotidase"/>
</dbReference>
<dbReference type="InterPro" id="IPR036523">
    <property type="entry name" value="SurE-like_sf"/>
</dbReference>
<dbReference type="NCBIfam" id="NF001490">
    <property type="entry name" value="PRK00346.1-4"/>
    <property type="match status" value="1"/>
</dbReference>
<dbReference type="NCBIfam" id="TIGR00087">
    <property type="entry name" value="surE"/>
    <property type="match status" value="1"/>
</dbReference>
<dbReference type="PANTHER" id="PTHR30457">
    <property type="entry name" value="5'-NUCLEOTIDASE SURE"/>
    <property type="match status" value="1"/>
</dbReference>
<dbReference type="PANTHER" id="PTHR30457:SF12">
    <property type="entry name" value="5'_3'-NUCLEOTIDASE SURE"/>
    <property type="match status" value="1"/>
</dbReference>
<dbReference type="Pfam" id="PF01975">
    <property type="entry name" value="SurE"/>
    <property type="match status" value="1"/>
</dbReference>
<dbReference type="SUPFAM" id="SSF64167">
    <property type="entry name" value="SurE-like"/>
    <property type="match status" value="1"/>
</dbReference>
<accession>B0CLL1</accession>
<proteinExistence type="inferred from homology"/>
<sequence length="255" mass="27450">MRILLTNDDGIHAEGLAVLERIARKLSDDVWVVAPETDQSGLAHSLTLSEPLRLRQIDARHFALRGTPTDCVIMGVRHVLPGAPNLVLSGVNSGANMADDVTYSGTVAGAMEGTLLGVRAIALSQEYEYAGDRRIVPWETAEAHAPELIGRLMEAGWPEGVLLNLNFPNCAPEEVKGVRVTAQGKLSHDARLDERRDGRGFPYFWLHFGRGKAPVADDSDIAAIRSGCISVTPLHLDLTAHKVRAELGAALGVEA</sequence>
<feature type="chain" id="PRO_1000075018" description="5'-nucleotidase SurE">
    <location>
        <begin position="1"/>
        <end position="255"/>
    </location>
</feature>
<feature type="binding site" evidence="1">
    <location>
        <position position="8"/>
    </location>
    <ligand>
        <name>a divalent metal cation</name>
        <dbReference type="ChEBI" id="CHEBI:60240"/>
    </ligand>
</feature>
<feature type="binding site" evidence="1">
    <location>
        <position position="9"/>
    </location>
    <ligand>
        <name>a divalent metal cation</name>
        <dbReference type="ChEBI" id="CHEBI:60240"/>
    </ligand>
</feature>
<feature type="binding site" evidence="1">
    <location>
        <position position="40"/>
    </location>
    <ligand>
        <name>a divalent metal cation</name>
        <dbReference type="ChEBI" id="CHEBI:60240"/>
    </ligand>
</feature>
<feature type="binding site" evidence="1">
    <location>
        <position position="92"/>
    </location>
    <ligand>
        <name>a divalent metal cation</name>
        <dbReference type="ChEBI" id="CHEBI:60240"/>
    </ligand>
</feature>